<evidence type="ECO:0000255" key="1">
    <source>
        <dbReference type="HAMAP-Rule" id="MF_00226"/>
    </source>
</evidence>
<evidence type="ECO:0000305" key="2"/>
<accession>A4VYN4</accession>
<proteinExistence type="inferred from homology"/>
<comment type="similarity">
    <text evidence="1">Belongs to the CinA family.</text>
</comment>
<comment type="sequence caution" evidence="2">
    <conflict type="erroneous initiation">
        <sequence resource="EMBL-CDS" id="ABP91223"/>
    </conflict>
</comment>
<feature type="chain" id="PRO_0000336530" description="Putative competence-damage inducible protein">
    <location>
        <begin position="1"/>
        <end position="393"/>
    </location>
</feature>
<dbReference type="EMBL" id="CP000408">
    <property type="protein sequence ID" value="ABP91223.1"/>
    <property type="status" value="ALT_INIT"/>
    <property type="molecule type" value="Genomic_DNA"/>
</dbReference>
<dbReference type="SMR" id="A4VYN4"/>
<dbReference type="KEGG" id="ssv:SSU98_0063"/>
<dbReference type="HOGENOM" id="CLU_030805_9_3_9"/>
<dbReference type="CDD" id="cd00885">
    <property type="entry name" value="cinA"/>
    <property type="match status" value="1"/>
</dbReference>
<dbReference type="Gene3D" id="3.30.70.2860">
    <property type="match status" value="1"/>
</dbReference>
<dbReference type="Gene3D" id="3.90.950.20">
    <property type="entry name" value="CinA-like"/>
    <property type="match status" value="1"/>
</dbReference>
<dbReference type="Gene3D" id="3.40.980.10">
    <property type="entry name" value="MoaB/Mog-like domain"/>
    <property type="match status" value="1"/>
</dbReference>
<dbReference type="HAMAP" id="MF_00226_B">
    <property type="entry name" value="CinA_B"/>
    <property type="match status" value="1"/>
</dbReference>
<dbReference type="InterPro" id="IPR050101">
    <property type="entry name" value="CinA"/>
</dbReference>
<dbReference type="InterPro" id="IPR036653">
    <property type="entry name" value="CinA-like_C"/>
</dbReference>
<dbReference type="InterPro" id="IPR008136">
    <property type="entry name" value="CinA_C"/>
</dbReference>
<dbReference type="InterPro" id="IPR041424">
    <property type="entry name" value="CinA_KH"/>
</dbReference>
<dbReference type="InterPro" id="IPR008135">
    <property type="entry name" value="Competence-induced_CinA"/>
</dbReference>
<dbReference type="InterPro" id="IPR036425">
    <property type="entry name" value="MoaB/Mog-like_dom_sf"/>
</dbReference>
<dbReference type="InterPro" id="IPR001453">
    <property type="entry name" value="MoaB/Mog_dom"/>
</dbReference>
<dbReference type="NCBIfam" id="TIGR00200">
    <property type="entry name" value="cinA_nterm"/>
    <property type="match status" value="1"/>
</dbReference>
<dbReference type="NCBIfam" id="NF001813">
    <property type="entry name" value="PRK00549.1"/>
    <property type="match status" value="1"/>
</dbReference>
<dbReference type="PANTHER" id="PTHR13939">
    <property type="entry name" value="NICOTINAMIDE-NUCLEOTIDE AMIDOHYDROLASE PNCC"/>
    <property type="match status" value="1"/>
</dbReference>
<dbReference type="PANTHER" id="PTHR13939:SF0">
    <property type="entry name" value="NMN AMIDOHYDROLASE-LIKE PROTEIN YFAY"/>
    <property type="match status" value="1"/>
</dbReference>
<dbReference type="Pfam" id="PF02464">
    <property type="entry name" value="CinA"/>
    <property type="match status" value="1"/>
</dbReference>
<dbReference type="Pfam" id="PF18146">
    <property type="entry name" value="CinA_KH"/>
    <property type="match status" value="1"/>
</dbReference>
<dbReference type="Pfam" id="PF00994">
    <property type="entry name" value="MoCF_biosynth"/>
    <property type="match status" value="1"/>
</dbReference>
<dbReference type="PIRSF" id="PIRSF006728">
    <property type="entry name" value="CinA"/>
    <property type="match status" value="1"/>
</dbReference>
<dbReference type="SMART" id="SM00852">
    <property type="entry name" value="MoCF_biosynth"/>
    <property type="match status" value="1"/>
</dbReference>
<dbReference type="SUPFAM" id="SSF142433">
    <property type="entry name" value="CinA-like"/>
    <property type="match status" value="1"/>
</dbReference>
<dbReference type="SUPFAM" id="SSF53218">
    <property type="entry name" value="Molybdenum cofactor biosynthesis proteins"/>
    <property type="match status" value="1"/>
</dbReference>
<organism>
    <name type="scientific">Streptococcus suis (strain 98HAH33)</name>
    <dbReference type="NCBI Taxonomy" id="391296"/>
    <lineage>
        <taxon>Bacteria</taxon>
        <taxon>Bacillati</taxon>
        <taxon>Bacillota</taxon>
        <taxon>Bacilli</taxon>
        <taxon>Lactobacillales</taxon>
        <taxon>Streptococcaceae</taxon>
        <taxon>Streptococcus</taxon>
    </lineage>
</organism>
<sequence length="393" mass="42863">MKAELIAVGTEILTGQIINTNAQFLSEKCAELGIDVYFHTAVGDNEGRLLSTLEVASKRSNMVVLCGGLGPTEDDLTKQTLATFLGRNLVFDELAMAKLDRFFASRPGRVRTPNNERQAQIVEGSQALQNPAGLAVGGMIEQDGVTYIVLPGPPSELKAMFSESLLPLLSQSQQQLYSRVLRFFGIGESQLVTVLADVIDKQTDPTLAPYAKVGEVTLRLSTKATSQEEANLRLNQLEEDILQHDKLADYFYAYGEDNSLVKTVATRLAEKRQTIAIVEQGTGGLLQAELSLALADQPYFSGGKVVGQLGIESGWLSEEADCIRQELQADLGLAVSVLIKPESTEDNVLAKVYLTLATPSGISQKEIDLGGYSWQYLRQLACLQAWDFVRNTL</sequence>
<name>CINA_STRS2</name>
<reference key="1">
    <citation type="journal article" date="2007" name="PLoS ONE">
        <title>A glimpse of streptococcal toxic shock syndrome from comparative genomics of S. suis 2 Chinese isolates.</title>
        <authorList>
            <person name="Chen C."/>
            <person name="Tang J."/>
            <person name="Dong W."/>
            <person name="Wang C."/>
            <person name="Feng Y."/>
            <person name="Wang J."/>
            <person name="Zheng F."/>
            <person name="Pan X."/>
            <person name="Liu D."/>
            <person name="Li M."/>
            <person name="Song Y."/>
            <person name="Zhu X."/>
            <person name="Sun H."/>
            <person name="Feng T."/>
            <person name="Guo Z."/>
            <person name="Ju A."/>
            <person name="Ge J."/>
            <person name="Dong Y."/>
            <person name="Sun W."/>
            <person name="Jiang Y."/>
            <person name="Wang J."/>
            <person name="Yan J."/>
            <person name="Yang H."/>
            <person name="Wang X."/>
            <person name="Gao G.F."/>
            <person name="Yang R."/>
            <person name="Wang J."/>
            <person name="Yu J."/>
        </authorList>
    </citation>
    <scope>NUCLEOTIDE SEQUENCE [LARGE SCALE GENOMIC DNA]</scope>
    <source>
        <strain>98HAH33</strain>
    </source>
</reference>
<gene>
    <name evidence="1" type="primary">cinA</name>
    <name type="ordered locus">SSU98_0063</name>
</gene>
<protein>
    <recommendedName>
        <fullName evidence="1">Putative competence-damage inducible protein</fullName>
    </recommendedName>
</protein>